<gene>
    <name evidence="1" type="primary">tilS</name>
    <name type="ordered locus">SMU_13</name>
</gene>
<evidence type="ECO:0000255" key="1">
    <source>
        <dbReference type="HAMAP-Rule" id="MF_01161"/>
    </source>
</evidence>
<reference key="1">
    <citation type="journal article" date="2002" name="Proc. Natl. Acad. Sci. U.S.A.">
        <title>Genome sequence of Streptococcus mutans UA159, a cariogenic dental pathogen.</title>
        <authorList>
            <person name="Ajdic D.J."/>
            <person name="McShan W.M."/>
            <person name="McLaughlin R.E."/>
            <person name="Savic G."/>
            <person name="Chang J."/>
            <person name="Carson M.B."/>
            <person name="Primeaux C."/>
            <person name="Tian R."/>
            <person name="Kenton S."/>
            <person name="Jia H.G."/>
            <person name="Lin S.P."/>
            <person name="Qian Y."/>
            <person name="Li S."/>
            <person name="Zhu H."/>
            <person name="Najar F.Z."/>
            <person name="Lai H."/>
            <person name="White J."/>
            <person name="Roe B.A."/>
            <person name="Ferretti J.J."/>
        </authorList>
    </citation>
    <scope>NUCLEOTIDE SEQUENCE [LARGE SCALE GENOMIC DNA]</scope>
    <source>
        <strain>ATCC 700610 / UA159</strain>
    </source>
</reference>
<feature type="chain" id="PRO_0000181777" description="tRNA(Ile)-lysidine synthase">
    <location>
        <begin position="1"/>
        <end position="423"/>
    </location>
</feature>
<feature type="binding site" evidence="1">
    <location>
        <begin position="27"/>
        <end position="32"/>
    </location>
    <ligand>
        <name>ATP</name>
        <dbReference type="ChEBI" id="CHEBI:30616"/>
    </ligand>
</feature>
<accession>Q8DWM9</accession>
<organism>
    <name type="scientific">Streptococcus mutans serotype c (strain ATCC 700610 / UA159)</name>
    <dbReference type="NCBI Taxonomy" id="210007"/>
    <lineage>
        <taxon>Bacteria</taxon>
        <taxon>Bacillati</taxon>
        <taxon>Bacillota</taxon>
        <taxon>Bacilli</taxon>
        <taxon>Lactobacillales</taxon>
        <taxon>Streptococcaceae</taxon>
        <taxon>Streptococcus</taxon>
    </lineage>
</organism>
<keyword id="KW-0067">ATP-binding</keyword>
<keyword id="KW-0963">Cytoplasm</keyword>
<keyword id="KW-0436">Ligase</keyword>
<keyword id="KW-0547">Nucleotide-binding</keyword>
<keyword id="KW-1185">Reference proteome</keyword>
<keyword id="KW-0819">tRNA processing</keyword>
<comment type="function">
    <text evidence="1">Ligates lysine onto the cytidine present at position 34 of the AUA codon-specific tRNA(Ile) that contains the anticodon CAU, in an ATP-dependent manner. Cytidine is converted to lysidine, thus changing the amino acid specificity of the tRNA from methionine to isoleucine.</text>
</comment>
<comment type="catalytic activity">
    <reaction evidence="1">
        <text>cytidine(34) in tRNA(Ile2) + L-lysine + ATP = lysidine(34) in tRNA(Ile2) + AMP + diphosphate + H(+)</text>
        <dbReference type="Rhea" id="RHEA:43744"/>
        <dbReference type="Rhea" id="RHEA-COMP:10625"/>
        <dbReference type="Rhea" id="RHEA-COMP:10670"/>
        <dbReference type="ChEBI" id="CHEBI:15378"/>
        <dbReference type="ChEBI" id="CHEBI:30616"/>
        <dbReference type="ChEBI" id="CHEBI:32551"/>
        <dbReference type="ChEBI" id="CHEBI:33019"/>
        <dbReference type="ChEBI" id="CHEBI:82748"/>
        <dbReference type="ChEBI" id="CHEBI:83665"/>
        <dbReference type="ChEBI" id="CHEBI:456215"/>
        <dbReference type="EC" id="6.3.4.19"/>
    </reaction>
</comment>
<comment type="subcellular location">
    <subcellularLocation>
        <location evidence="1">Cytoplasm</location>
    </subcellularLocation>
</comment>
<comment type="domain">
    <text>The N-terminal region contains the highly conserved SGGXDS motif, predicted to be a P-loop motif involved in ATP binding.</text>
</comment>
<comment type="similarity">
    <text evidence="1">Belongs to the tRNA(Ile)-lysidine synthase family.</text>
</comment>
<protein>
    <recommendedName>
        <fullName evidence="1">tRNA(Ile)-lysidine synthase</fullName>
        <ecNumber evidence="1">6.3.4.19</ecNumber>
    </recommendedName>
    <alternativeName>
        <fullName evidence="1">tRNA(Ile)-2-lysyl-cytidine synthase</fullName>
    </alternativeName>
    <alternativeName>
        <fullName evidence="1">tRNA(Ile)-lysidine synthetase</fullName>
    </alternativeName>
</protein>
<name>TILS_STRMU</name>
<sequence length="423" mass="50414">MTYEKVLKYVQEKKFFETHYNILIAVSGGVDSMNLLHFLHIYQKKLQIRIAVAHVNHKQRPQADEEEIYLKNWARDNHIPFYTAVFKGIFSEKKARDFRYTFFKNIMKEHGYTALVTAHHANDQAETVFLRLLRGSRLRYLTGIKEIQEFGNGQLIRPFLKFHKKELPNIFHFDDDSNQGDSYLRNRIRNHYLPILTQENPKLSQHLIQMSEETNLLFKAFSDLTSQLDIQDCQIFRSQSEAIQYFLLQNYLRKFPNLEVSKAQFDNLLHILRTKDYYYDYLKNNYYLKKDKKRFKICKIGPETDRFEGEKVLEYGSMVKYGQYIFSFQEGSDSKKGIPVKNDFPIIIRRRKPGDKIKLGSHSKKLRRLFIDEKIPIFKRSNAIIVEQDSDIILILLDGVTYLRKGFKDDIMKGRLYIQNRNW</sequence>
<proteinExistence type="inferred from homology"/>
<dbReference type="EC" id="6.3.4.19" evidence="1"/>
<dbReference type="EMBL" id="AE014133">
    <property type="protein sequence ID" value="AAN57804.1"/>
    <property type="molecule type" value="Genomic_DNA"/>
</dbReference>
<dbReference type="RefSeq" id="NP_720498.1">
    <property type="nucleotide sequence ID" value="NC_004350.2"/>
</dbReference>
<dbReference type="RefSeq" id="WP_002262638.1">
    <property type="nucleotide sequence ID" value="NC_004350.2"/>
</dbReference>
<dbReference type="SMR" id="Q8DWM9"/>
<dbReference type="STRING" id="210007.SMU_13"/>
<dbReference type="KEGG" id="smu:SMU_13"/>
<dbReference type="PATRIC" id="fig|210007.7.peg.11"/>
<dbReference type="eggNOG" id="COG0037">
    <property type="taxonomic scope" value="Bacteria"/>
</dbReference>
<dbReference type="HOGENOM" id="CLU_018869_0_2_9"/>
<dbReference type="OrthoDB" id="9807403at2"/>
<dbReference type="PhylomeDB" id="Q8DWM9"/>
<dbReference type="Proteomes" id="UP000002512">
    <property type="component" value="Chromosome"/>
</dbReference>
<dbReference type="GO" id="GO:0005737">
    <property type="term" value="C:cytoplasm"/>
    <property type="evidence" value="ECO:0007669"/>
    <property type="project" value="UniProtKB-SubCell"/>
</dbReference>
<dbReference type="GO" id="GO:0005524">
    <property type="term" value="F:ATP binding"/>
    <property type="evidence" value="ECO:0007669"/>
    <property type="project" value="UniProtKB-UniRule"/>
</dbReference>
<dbReference type="GO" id="GO:0032267">
    <property type="term" value="F:tRNA(Ile)-lysidine synthase activity"/>
    <property type="evidence" value="ECO:0007669"/>
    <property type="project" value="UniProtKB-EC"/>
</dbReference>
<dbReference type="GO" id="GO:0006400">
    <property type="term" value="P:tRNA modification"/>
    <property type="evidence" value="ECO:0007669"/>
    <property type="project" value="UniProtKB-UniRule"/>
</dbReference>
<dbReference type="CDD" id="cd01992">
    <property type="entry name" value="TilS_N"/>
    <property type="match status" value="1"/>
</dbReference>
<dbReference type="Gene3D" id="3.40.50.620">
    <property type="entry name" value="HUPs"/>
    <property type="match status" value="1"/>
</dbReference>
<dbReference type="HAMAP" id="MF_01161">
    <property type="entry name" value="tRNA_Ile_lys_synt"/>
    <property type="match status" value="1"/>
</dbReference>
<dbReference type="InterPro" id="IPR012796">
    <property type="entry name" value="Lysidine-tRNA-synth_C"/>
</dbReference>
<dbReference type="InterPro" id="IPR014729">
    <property type="entry name" value="Rossmann-like_a/b/a_fold"/>
</dbReference>
<dbReference type="InterPro" id="IPR011063">
    <property type="entry name" value="TilS/TtcA_N"/>
</dbReference>
<dbReference type="InterPro" id="IPR012094">
    <property type="entry name" value="tRNA_Ile_lys_synt"/>
</dbReference>
<dbReference type="InterPro" id="IPR012795">
    <property type="entry name" value="tRNA_Ile_lys_synt_N"/>
</dbReference>
<dbReference type="NCBIfam" id="TIGR02433">
    <property type="entry name" value="lysidine_TilS_C"/>
    <property type="match status" value="1"/>
</dbReference>
<dbReference type="NCBIfam" id="TIGR02432">
    <property type="entry name" value="lysidine_TilS_N"/>
    <property type="match status" value="1"/>
</dbReference>
<dbReference type="PANTHER" id="PTHR43033">
    <property type="entry name" value="TRNA(ILE)-LYSIDINE SYNTHASE-RELATED"/>
    <property type="match status" value="1"/>
</dbReference>
<dbReference type="PANTHER" id="PTHR43033:SF1">
    <property type="entry name" value="TRNA(ILE)-LYSIDINE SYNTHASE-RELATED"/>
    <property type="match status" value="1"/>
</dbReference>
<dbReference type="Pfam" id="PF01171">
    <property type="entry name" value="ATP_bind_3"/>
    <property type="match status" value="1"/>
</dbReference>
<dbReference type="Pfam" id="PF11734">
    <property type="entry name" value="TilS_C"/>
    <property type="match status" value="1"/>
</dbReference>
<dbReference type="SMART" id="SM00977">
    <property type="entry name" value="TilS_C"/>
    <property type="match status" value="1"/>
</dbReference>
<dbReference type="SUPFAM" id="SSF52402">
    <property type="entry name" value="Adenine nucleotide alpha hydrolases-like"/>
    <property type="match status" value="1"/>
</dbReference>
<dbReference type="SUPFAM" id="SSF56037">
    <property type="entry name" value="PheT/TilS domain"/>
    <property type="match status" value="1"/>
</dbReference>